<evidence type="ECO:0000255" key="1">
    <source>
        <dbReference type="HAMAP-Rule" id="MF_00272"/>
    </source>
</evidence>
<evidence type="ECO:0000255" key="2">
    <source>
        <dbReference type="PROSITE-ProRule" id="PRU01066"/>
    </source>
</evidence>
<sequence length="131" mass="13908">MSEIPADLSYTTEHEWVQRTGDGTVRVGITDYAQSALGDVVFVQLPDVGSDVTAGESFGEVESTKSVSDLYAPVTAKVIAVNGDLEGNPQLVNSDPYGEGWLVELQTETESMQAGLASLLDAEGYRAHVAD</sequence>
<dbReference type="EMBL" id="CP000511">
    <property type="protein sequence ID" value="ABM13938.1"/>
    <property type="molecule type" value="Genomic_DNA"/>
</dbReference>
<dbReference type="RefSeq" id="WP_011780343.1">
    <property type="nucleotide sequence ID" value="NC_008726.1"/>
</dbReference>
<dbReference type="SMR" id="A1T9T8"/>
<dbReference type="STRING" id="350058.Mvan_3136"/>
<dbReference type="KEGG" id="mva:Mvan_3136"/>
<dbReference type="eggNOG" id="COG0509">
    <property type="taxonomic scope" value="Bacteria"/>
</dbReference>
<dbReference type="HOGENOM" id="CLU_097408_2_2_11"/>
<dbReference type="Proteomes" id="UP000009159">
    <property type="component" value="Chromosome"/>
</dbReference>
<dbReference type="GO" id="GO:0005829">
    <property type="term" value="C:cytosol"/>
    <property type="evidence" value="ECO:0007669"/>
    <property type="project" value="TreeGrafter"/>
</dbReference>
<dbReference type="GO" id="GO:0005960">
    <property type="term" value="C:glycine cleavage complex"/>
    <property type="evidence" value="ECO:0007669"/>
    <property type="project" value="InterPro"/>
</dbReference>
<dbReference type="GO" id="GO:0019464">
    <property type="term" value="P:glycine decarboxylation via glycine cleavage system"/>
    <property type="evidence" value="ECO:0007669"/>
    <property type="project" value="UniProtKB-UniRule"/>
</dbReference>
<dbReference type="CDD" id="cd06848">
    <property type="entry name" value="GCS_H"/>
    <property type="match status" value="1"/>
</dbReference>
<dbReference type="Gene3D" id="2.40.50.100">
    <property type="match status" value="1"/>
</dbReference>
<dbReference type="HAMAP" id="MF_00272">
    <property type="entry name" value="GcvH"/>
    <property type="match status" value="1"/>
</dbReference>
<dbReference type="InterPro" id="IPR000089">
    <property type="entry name" value="Biotin_lipoyl"/>
</dbReference>
<dbReference type="InterPro" id="IPR002930">
    <property type="entry name" value="GCV_H"/>
</dbReference>
<dbReference type="InterPro" id="IPR033753">
    <property type="entry name" value="GCV_H/Fam206"/>
</dbReference>
<dbReference type="InterPro" id="IPR017453">
    <property type="entry name" value="GCV_H_sub"/>
</dbReference>
<dbReference type="InterPro" id="IPR011053">
    <property type="entry name" value="Single_hybrid_motif"/>
</dbReference>
<dbReference type="NCBIfam" id="TIGR00527">
    <property type="entry name" value="gcvH"/>
    <property type="match status" value="1"/>
</dbReference>
<dbReference type="NCBIfam" id="NF002270">
    <property type="entry name" value="PRK01202.1"/>
    <property type="match status" value="1"/>
</dbReference>
<dbReference type="PANTHER" id="PTHR11715">
    <property type="entry name" value="GLYCINE CLEAVAGE SYSTEM H PROTEIN"/>
    <property type="match status" value="1"/>
</dbReference>
<dbReference type="PANTHER" id="PTHR11715:SF3">
    <property type="entry name" value="GLYCINE CLEAVAGE SYSTEM H PROTEIN-RELATED"/>
    <property type="match status" value="1"/>
</dbReference>
<dbReference type="Pfam" id="PF01597">
    <property type="entry name" value="GCV_H"/>
    <property type="match status" value="1"/>
</dbReference>
<dbReference type="SUPFAM" id="SSF51230">
    <property type="entry name" value="Single hybrid motif"/>
    <property type="match status" value="1"/>
</dbReference>
<dbReference type="PROSITE" id="PS50968">
    <property type="entry name" value="BIOTINYL_LIPOYL"/>
    <property type="match status" value="1"/>
</dbReference>
<gene>
    <name evidence="1" type="primary">gcvH</name>
    <name type="ordered locus">Mvan_3136</name>
</gene>
<accession>A1T9T8</accession>
<organism>
    <name type="scientific">Mycolicibacterium vanbaalenii (strain DSM 7251 / JCM 13017 / BCRC 16820 / KCTC 9966 / NRRL B-24157 / PYR-1)</name>
    <name type="common">Mycobacterium vanbaalenii</name>
    <dbReference type="NCBI Taxonomy" id="350058"/>
    <lineage>
        <taxon>Bacteria</taxon>
        <taxon>Bacillati</taxon>
        <taxon>Actinomycetota</taxon>
        <taxon>Actinomycetes</taxon>
        <taxon>Mycobacteriales</taxon>
        <taxon>Mycobacteriaceae</taxon>
        <taxon>Mycolicibacterium</taxon>
    </lineage>
</organism>
<feature type="chain" id="PRO_0000302398" description="Glycine cleavage system H protein">
    <location>
        <begin position="1"/>
        <end position="131"/>
    </location>
</feature>
<feature type="domain" description="Lipoyl-binding" evidence="2">
    <location>
        <begin position="24"/>
        <end position="106"/>
    </location>
</feature>
<feature type="modified residue" description="N6-lipoyllysine" evidence="1">
    <location>
        <position position="65"/>
    </location>
</feature>
<name>GCSH_MYCVP</name>
<comment type="function">
    <text evidence="1">The glycine cleavage system catalyzes the degradation of glycine. The H protein shuttles the methylamine group of glycine from the P protein to the T protein.</text>
</comment>
<comment type="cofactor">
    <cofactor evidence="1">
        <name>(R)-lipoate</name>
        <dbReference type="ChEBI" id="CHEBI:83088"/>
    </cofactor>
    <text evidence="1">Binds 1 lipoyl cofactor covalently.</text>
</comment>
<comment type="subunit">
    <text evidence="1">The glycine cleavage system is composed of four proteins: P, T, L and H.</text>
</comment>
<comment type="similarity">
    <text evidence="1">Belongs to the GcvH family.</text>
</comment>
<keyword id="KW-0450">Lipoyl</keyword>
<proteinExistence type="inferred from homology"/>
<protein>
    <recommendedName>
        <fullName evidence="1">Glycine cleavage system H protein</fullName>
    </recommendedName>
</protein>
<reference key="1">
    <citation type="submission" date="2006-12" db="EMBL/GenBank/DDBJ databases">
        <title>Complete sequence of Mycobacterium vanbaalenii PYR-1.</title>
        <authorList>
            <consortium name="US DOE Joint Genome Institute"/>
            <person name="Copeland A."/>
            <person name="Lucas S."/>
            <person name="Lapidus A."/>
            <person name="Barry K."/>
            <person name="Detter J.C."/>
            <person name="Glavina del Rio T."/>
            <person name="Hammon N."/>
            <person name="Israni S."/>
            <person name="Dalin E."/>
            <person name="Tice H."/>
            <person name="Pitluck S."/>
            <person name="Singan V."/>
            <person name="Schmutz J."/>
            <person name="Larimer F."/>
            <person name="Land M."/>
            <person name="Hauser L."/>
            <person name="Kyrpides N."/>
            <person name="Anderson I.J."/>
            <person name="Miller C."/>
            <person name="Richardson P."/>
        </authorList>
    </citation>
    <scope>NUCLEOTIDE SEQUENCE [LARGE SCALE GENOMIC DNA]</scope>
    <source>
        <strain>DSM 7251 / JCM 13017 / BCRC 16820 / KCTC 9966 / NRRL B-24157 / PYR-1</strain>
    </source>
</reference>